<organism>
    <name type="scientific">Liriodendron tulipifera</name>
    <name type="common">Tuliptree</name>
    <name type="synonym">Tulip poplar</name>
    <dbReference type="NCBI Taxonomy" id="3415"/>
    <lineage>
        <taxon>Eukaryota</taxon>
        <taxon>Viridiplantae</taxon>
        <taxon>Streptophyta</taxon>
        <taxon>Embryophyta</taxon>
        <taxon>Tracheophyta</taxon>
        <taxon>Spermatophyta</taxon>
        <taxon>Magnoliopsida</taxon>
        <taxon>Magnoliidae</taxon>
        <taxon>Magnoliales</taxon>
        <taxon>Magnoliaceae</taxon>
        <taxon>Liriodendron</taxon>
    </lineage>
</organism>
<evidence type="ECO:0000255" key="1">
    <source>
        <dbReference type="HAMAP-Rule" id="MF_01393"/>
    </source>
</evidence>
<comment type="function">
    <text evidence="1">Key component of the proton channel; it plays a direct role in the translocation of protons across the membrane.</text>
</comment>
<comment type="subunit">
    <text evidence="1">F-type ATPases have 2 components, CF(1) - the catalytic core - and CF(0) - the membrane proton channel. CF(1) has five subunits: alpha(3), beta(3), gamma(1), delta(1), epsilon(1). CF(0) has four main subunits: a, b, b' and c.</text>
</comment>
<comment type="subcellular location">
    <subcellularLocation>
        <location evidence="1">Plastid</location>
        <location evidence="1">Chloroplast thylakoid membrane</location>
        <topology evidence="1">Multi-pass membrane protein</topology>
    </subcellularLocation>
</comment>
<comment type="similarity">
    <text evidence="1">Belongs to the ATPase A chain family.</text>
</comment>
<keyword id="KW-0066">ATP synthesis</keyword>
<keyword id="KW-0138">CF(0)</keyword>
<keyword id="KW-0150">Chloroplast</keyword>
<keyword id="KW-0375">Hydrogen ion transport</keyword>
<keyword id="KW-0406">Ion transport</keyword>
<keyword id="KW-0472">Membrane</keyword>
<keyword id="KW-0934">Plastid</keyword>
<keyword id="KW-0793">Thylakoid</keyword>
<keyword id="KW-0812">Transmembrane</keyword>
<keyword id="KW-1133">Transmembrane helix</keyword>
<keyword id="KW-0813">Transport</keyword>
<dbReference type="EMBL" id="DQ899947">
    <property type="protein sequence ID" value="ABI32497.1"/>
    <property type="molecule type" value="Genomic_DNA"/>
</dbReference>
<dbReference type="RefSeq" id="YP_740190.1">
    <property type="nucleotide sequence ID" value="NC_008326.1"/>
</dbReference>
<dbReference type="SMR" id="Q0G9N1"/>
<dbReference type="GeneID" id="4266598"/>
<dbReference type="GO" id="GO:0009535">
    <property type="term" value="C:chloroplast thylakoid membrane"/>
    <property type="evidence" value="ECO:0007669"/>
    <property type="project" value="UniProtKB-SubCell"/>
</dbReference>
<dbReference type="GO" id="GO:0005886">
    <property type="term" value="C:plasma membrane"/>
    <property type="evidence" value="ECO:0007669"/>
    <property type="project" value="UniProtKB-UniRule"/>
</dbReference>
<dbReference type="GO" id="GO:0045259">
    <property type="term" value="C:proton-transporting ATP synthase complex"/>
    <property type="evidence" value="ECO:0007669"/>
    <property type="project" value="UniProtKB-KW"/>
</dbReference>
<dbReference type="GO" id="GO:0046933">
    <property type="term" value="F:proton-transporting ATP synthase activity, rotational mechanism"/>
    <property type="evidence" value="ECO:0007669"/>
    <property type="project" value="UniProtKB-UniRule"/>
</dbReference>
<dbReference type="CDD" id="cd00310">
    <property type="entry name" value="ATP-synt_Fo_a_6"/>
    <property type="match status" value="1"/>
</dbReference>
<dbReference type="FunFam" id="1.20.120.220:FF:000001">
    <property type="entry name" value="ATP synthase subunit a, chloroplastic"/>
    <property type="match status" value="1"/>
</dbReference>
<dbReference type="Gene3D" id="1.20.120.220">
    <property type="entry name" value="ATP synthase, F0 complex, subunit A"/>
    <property type="match status" value="1"/>
</dbReference>
<dbReference type="HAMAP" id="MF_01393">
    <property type="entry name" value="ATP_synth_a_bact"/>
    <property type="match status" value="1"/>
</dbReference>
<dbReference type="InterPro" id="IPR045082">
    <property type="entry name" value="ATP_syn_F0_a_bact/chloroplast"/>
</dbReference>
<dbReference type="InterPro" id="IPR000568">
    <property type="entry name" value="ATP_synth_F0_asu"/>
</dbReference>
<dbReference type="InterPro" id="IPR023011">
    <property type="entry name" value="ATP_synth_F0_asu_AS"/>
</dbReference>
<dbReference type="InterPro" id="IPR035908">
    <property type="entry name" value="F0_ATP_A_sf"/>
</dbReference>
<dbReference type="NCBIfam" id="TIGR01131">
    <property type="entry name" value="ATP_synt_6_or_A"/>
    <property type="match status" value="1"/>
</dbReference>
<dbReference type="PANTHER" id="PTHR42823">
    <property type="entry name" value="ATP SYNTHASE SUBUNIT A, CHLOROPLASTIC"/>
    <property type="match status" value="1"/>
</dbReference>
<dbReference type="PANTHER" id="PTHR42823:SF3">
    <property type="entry name" value="ATP SYNTHASE SUBUNIT A, CHLOROPLASTIC"/>
    <property type="match status" value="1"/>
</dbReference>
<dbReference type="Pfam" id="PF00119">
    <property type="entry name" value="ATP-synt_A"/>
    <property type="match status" value="1"/>
</dbReference>
<dbReference type="PRINTS" id="PR00123">
    <property type="entry name" value="ATPASEA"/>
</dbReference>
<dbReference type="SUPFAM" id="SSF81336">
    <property type="entry name" value="F1F0 ATP synthase subunit A"/>
    <property type="match status" value="1"/>
</dbReference>
<dbReference type="PROSITE" id="PS00449">
    <property type="entry name" value="ATPASE_A"/>
    <property type="match status" value="1"/>
</dbReference>
<reference key="1">
    <citation type="journal article" date="2006" name="BMC Evol. Biol.">
        <title>Complete plastid genome sequences of Drimys, Liriodendron, and Piper: implications for the phylogenetic relationships of magnoliids.</title>
        <authorList>
            <person name="Cai Z."/>
            <person name="Penaflor C."/>
            <person name="Kuehl J.V."/>
            <person name="Leebens-Mack J."/>
            <person name="Carlson J.E."/>
            <person name="dePamphilis C.W."/>
            <person name="Boore J.L."/>
            <person name="Jansen R.K."/>
        </authorList>
    </citation>
    <scope>NUCLEOTIDE SEQUENCE [LARGE SCALE GENOMIC DNA]</scope>
</reference>
<sequence length="247" mass="27157">MNVLPCSINTLKGLYDISGVEVGQHFYWQIGGFQVHAQVLITSWVVIAILLGSATIAVRNPQTIPTDGQNFFEYVLEFIRDLSKTQIGEEYGPWVPFIGTMFLFIFVSNWSGALLPRKIIQLPHGELAAPTNDINTTVALALPTSMAYFYAGFTKKGLSYFGKYIQPTPILLPINILEDFTKPLSLSFRLFGNILADELVVVVLVSLVPSVVPIPVMFLGLFTSGIQALIFATLAAAYIGESMEGHH</sequence>
<proteinExistence type="inferred from homology"/>
<protein>
    <recommendedName>
        <fullName evidence="1">ATP synthase subunit a, chloroplastic</fullName>
    </recommendedName>
    <alternativeName>
        <fullName evidence="1">ATP synthase F0 sector subunit a</fullName>
    </alternativeName>
    <alternativeName>
        <fullName evidence="1">F-ATPase subunit IV</fullName>
    </alternativeName>
</protein>
<accession>Q0G9N1</accession>
<feature type="chain" id="PRO_0000362568" description="ATP synthase subunit a, chloroplastic">
    <location>
        <begin position="1"/>
        <end position="247"/>
    </location>
</feature>
<feature type="transmembrane region" description="Helical" evidence="1">
    <location>
        <begin position="38"/>
        <end position="58"/>
    </location>
</feature>
<feature type="transmembrane region" description="Helical" evidence="1">
    <location>
        <begin position="95"/>
        <end position="115"/>
    </location>
</feature>
<feature type="transmembrane region" description="Helical" evidence="1">
    <location>
        <begin position="134"/>
        <end position="154"/>
    </location>
</feature>
<feature type="transmembrane region" description="Helical" evidence="1">
    <location>
        <begin position="199"/>
        <end position="219"/>
    </location>
</feature>
<feature type="transmembrane region" description="Helical" evidence="1">
    <location>
        <begin position="220"/>
        <end position="240"/>
    </location>
</feature>
<geneLocation type="chloroplast"/>
<gene>
    <name evidence="1" type="primary">atpI</name>
</gene>
<name>ATPI_LIRTU</name>